<gene>
    <name type="ordered locus">LI0223</name>
</gene>
<organism>
    <name type="scientific">Lawsonia intracellularis (strain PHE/MN1-00)</name>
    <dbReference type="NCBI Taxonomy" id="363253"/>
    <lineage>
        <taxon>Bacteria</taxon>
        <taxon>Pseudomonadati</taxon>
        <taxon>Thermodesulfobacteriota</taxon>
        <taxon>Desulfovibrionia</taxon>
        <taxon>Desulfovibrionales</taxon>
        <taxon>Desulfovibrionaceae</taxon>
        <taxon>Lawsonia</taxon>
    </lineage>
</organism>
<sequence>MKSCEIGQQGESAAALFLYNKGMSILERNWRKGRFEIDLVCQDIKTLVFVEVRTRKAKGMLLPEQTLTISKRCNIIHSAQLYLMDKKDWSMPCRFDVICIISKKTTLELEHYKNVFEFYEIMDSSNTSWQPW</sequence>
<comment type="similarity">
    <text evidence="1">Belongs to the UPF0102 family.</text>
</comment>
<accession>Q1MRU7</accession>
<proteinExistence type="inferred from homology"/>
<name>Y223_LAWIP</name>
<evidence type="ECO:0000255" key="1">
    <source>
        <dbReference type="HAMAP-Rule" id="MF_00048"/>
    </source>
</evidence>
<dbReference type="EMBL" id="AM180252">
    <property type="protein sequence ID" value="CAJ54279.1"/>
    <property type="molecule type" value="Genomic_DNA"/>
</dbReference>
<dbReference type="RefSeq" id="WP_011526305.1">
    <property type="nucleotide sequence ID" value="NC_008011.1"/>
</dbReference>
<dbReference type="SMR" id="Q1MRU7"/>
<dbReference type="STRING" id="363253.LI0223"/>
<dbReference type="KEGG" id="lip:LI0223"/>
<dbReference type="eggNOG" id="COG0792">
    <property type="taxonomic scope" value="Bacteria"/>
</dbReference>
<dbReference type="HOGENOM" id="CLU_115353_2_1_7"/>
<dbReference type="OrthoDB" id="9794876at2"/>
<dbReference type="Proteomes" id="UP000002430">
    <property type="component" value="Chromosome"/>
</dbReference>
<dbReference type="GO" id="GO:0003676">
    <property type="term" value="F:nucleic acid binding"/>
    <property type="evidence" value="ECO:0007669"/>
    <property type="project" value="InterPro"/>
</dbReference>
<dbReference type="Gene3D" id="3.40.1350.10">
    <property type="match status" value="1"/>
</dbReference>
<dbReference type="HAMAP" id="MF_00048">
    <property type="entry name" value="UPF0102"/>
    <property type="match status" value="1"/>
</dbReference>
<dbReference type="InterPro" id="IPR011335">
    <property type="entry name" value="Restrct_endonuc-II-like"/>
</dbReference>
<dbReference type="InterPro" id="IPR011856">
    <property type="entry name" value="tRNA_endonuc-like_dom_sf"/>
</dbReference>
<dbReference type="InterPro" id="IPR003509">
    <property type="entry name" value="UPF0102_YraN-like"/>
</dbReference>
<dbReference type="NCBIfam" id="NF009150">
    <property type="entry name" value="PRK12497.1-3"/>
    <property type="match status" value="1"/>
</dbReference>
<dbReference type="NCBIfam" id="NF011273">
    <property type="entry name" value="PRK14680.1"/>
    <property type="match status" value="1"/>
</dbReference>
<dbReference type="NCBIfam" id="TIGR00252">
    <property type="entry name" value="YraN family protein"/>
    <property type="match status" value="1"/>
</dbReference>
<dbReference type="PANTHER" id="PTHR34039">
    <property type="entry name" value="UPF0102 PROTEIN YRAN"/>
    <property type="match status" value="1"/>
</dbReference>
<dbReference type="PANTHER" id="PTHR34039:SF1">
    <property type="entry name" value="UPF0102 PROTEIN YRAN"/>
    <property type="match status" value="1"/>
</dbReference>
<dbReference type="Pfam" id="PF02021">
    <property type="entry name" value="UPF0102"/>
    <property type="match status" value="1"/>
</dbReference>
<dbReference type="SUPFAM" id="SSF52980">
    <property type="entry name" value="Restriction endonuclease-like"/>
    <property type="match status" value="1"/>
</dbReference>
<reference key="1">
    <citation type="submission" date="2005-11" db="EMBL/GenBank/DDBJ databases">
        <title>The complete genome sequence of Lawsonia intracellularis: the causative agent of proliferative enteropathy.</title>
        <authorList>
            <person name="Kaur K."/>
            <person name="Zhang Q."/>
            <person name="Beckler D."/>
            <person name="Munir S."/>
            <person name="Li L."/>
            <person name="Kinsley K."/>
            <person name="Herron L."/>
            <person name="Peterson A."/>
            <person name="May B."/>
            <person name="Singh S."/>
            <person name="Gebhart C."/>
            <person name="Kapur V."/>
        </authorList>
    </citation>
    <scope>NUCLEOTIDE SEQUENCE [LARGE SCALE GENOMIC DNA]</scope>
    <source>
        <strain>PHE/MN1-00</strain>
    </source>
</reference>
<feature type="chain" id="PRO_0000336193" description="UPF0102 protein LI0223">
    <location>
        <begin position="1"/>
        <end position="132"/>
    </location>
</feature>
<protein>
    <recommendedName>
        <fullName evidence="1">UPF0102 protein LI0223</fullName>
    </recommendedName>
</protein>
<keyword id="KW-1185">Reference proteome</keyword>